<reference key="1">
    <citation type="journal article" date="2006" name="PLoS Genet.">
        <title>Comparative genomics of emerging human ehrlichiosis agents.</title>
        <authorList>
            <person name="Dunning Hotopp J.C."/>
            <person name="Lin M."/>
            <person name="Madupu R."/>
            <person name="Crabtree J."/>
            <person name="Angiuoli S.V."/>
            <person name="Eisen J.A."/>
            <person name="Seshadri R."/>
            <person name="Ren Q."/>
            <person name="Wu M."/>
            <person name="Utterback T.R."/>
            <person name="Smith S."/>
            <person name="Lewis M."/>
            <person name="Khouri H."/>
            <person name="Zhang C."/>
            <person name="Niu H."/>
            <person name="Lin Q."/>
            <person name="Ohashi N."/>
            <person name="Zhi N."/>
            <person name="Nelson W.C."/>
            <person name="Brinkac L.M."/>
            <person name="Dodson R.J."/>
            <person name="Rosovitz M.J."/>
            <person name="Sundaram J.P."/>
            <person name="Daugherty S.C."/>
            <person name="Davidsen T."/>
            <person name="Durkin A.S."/>
            <person name="Gwinn M.L."/>
            <person name="Haft D.H."/>
            <person name="Selengut J.D."/>
            <person name="Sullivan S.A."/>
            <person name="Zafar N."/>
            <person name="Zhou L."/>
            <person name="Benahmed F."/>
            <person name="Forberger H."/>
            <person name="Halpin R."/>
            <person name="Mulligan S."/>
            <person name="Robinson J."/>
            <person name="White O."/>
            <person name="Rikihisa Y."/>
            <person name="Tettelin H."/>
        </authorList>
    </citation>
    <scope>NUCLEOTIDE SEQUENCE [LARGE SCALE GENOMIC DNA]</scope>
    <source>
        <strain>ATCC CRL-10679 / Arkansas</strain>
    </source>
</reference>
<feature type="chain" id="PRO_1000002752" description="Crossover junction endodeoxyribonuclease RuvC">
    <location>
        <begin position="1"/>
        <end position="156"/>
    </location>
</feature>
<feature type="active site" evidence="1">
    <location>
        <position position="7"/>
    </location>
</feature>
<feature type="active site" evidence="1">
    <location>
        <position position="66"/>
    </location>
</feature>
<feature type="active site" evidence="1">
    <location>
        <position position="138"/>
    </location>
</feature>
<feature type="binding site" evidence="1">
    <location>
        <position position="7"/>
    </location>
    <ligand>
        <name>Mg(2+)</name>
        <dbReference type="ChEBI" id="CHEBI:18420"/>
        <label>1</label>
    </ligand>
</feature>
<feature type="binding site" evidence="1">
    <location>
        <position position="66"/>
    </location>
    <ligand>
        <name>Mg(2+)</name>
        <dbReference type="ChEBI" id="CHEBI:18420"/>
        <label>2</label>
    </ligand>
</feature>
<feature type="binding site" evidence="1">
    <location>
        <position position="138"/>
    </location>
    <ligand>
        <name>Mg(2+)</name>
        <dbReference type="ChEBI" id="CHEBI:18420"/>
        <label>1</label>
    </ligand>
</feature>
<proteinExistence type="inferred from homology"/>
<name>RUVC_EHRCR</name>
<comment type="function">
    <text evidence="1">The RuvA-RuvB-RuvC complex processes Holliday junction (HJ) DNA during genetic recombination and DNA repair. Endonuclease that resolves HJ intermediates. Cleaves cruciform DNA by making single-stranded nicks across the HJ at symmetrical positions within the homologous arms, yielding a 5'-phosphate and a 3'-hydroxyl group; requires a central core of homology in the junction. The consensus cleavage sequence is 5'-(A/T)TT(C/G)-3'. Cleavage occurs on the 3'-side of the TT dinucleotide at the point of strand exchange. HJ branch migration catalyzed by RuvA-RuvB allows RuvC to scan DNA until it finds its consensus sequence, where it cleaves and resolves the cruciform DNA.</text>
</comment>
<comment type="catalytic activity">
    <reaction evidence="1">
        <text>Endonucleolytic cleavage at a junction such as a reciprocal single-stranded crossover between two homologous DNA duplexes (Holliday junction).</text>
        <dbReference type="EC" id="3.1.21.10"/>
    </reaction>
</comment>
<comment type="cofactor">
    <cofactor evidence="1">
        <name>Mg(2+)</name>
        <dbReference type="ChEBI" id="CHEBI:18420"/>
    </cofactor>
    <text evidence="1">Binds 2 Mg(2+) ion per subunit.</text>
</comment>
<comment type="subunit">
    <text evidence="1">Homodimer which binds Holliday junction (HJ) DNA. The HJ becomes 2-fold symmetrical on binding to RuvC with unstacked arms; it has a different conformation from HJ DNA in complex with RuvA. In the full resolvosome a probable DNA-RuvA(4)-RuvB(12)-RuvC(2) complex forms which resolves the HJ.</text>
</comment>
<comment type="subcellular location">
    <subcellularLocation>
        <location evidence="1">Cytoplasm</location>
    </subcellularLocation>
</comment>
<comment type="similarity">
    <text evidence="1">Belongs to the RuvC family.</text>
</comment>
<dbReference type="EC" id="3.1.21.10" evidence="1"/>
<dbReference type="EMBL" id="CP000236">
    <property type="protein sequence ID" value="ABD45348.1"/>
    <property type="molecule type" value="Genomic_DNA"/>
</dbReference>
<dbReference type="RefSeq" id="WP_006011656.1">
    <property type="nucleotide sequence ID" value="NC_007799.1"/>
</dbReference>
<dbReference type="SMR" id="Q2GI72"/>
<dbReference type="STRING" id="205920.ECH_0028"/>
<dbReference type="KEGG" id="ech:ECH_0028"/>
<dbReference type="eggNOG" id="COG0817">
    <property type="taxonomic scope" value="Bacteria"/>
</dbReference>
<dbReference type="HOGENOM" id="CLU_091257_3_1_5"/>
<dbReference type="OrthoDB" id="9805499at2"/>
<dbReference type="Proteomes" id="UP000008320">
    <property type="component" value="Chromosome"/>
</dbReference>
<dbReference type="GO" id="GO:0005737">
    <property type="term" value="C:cytoplasm"/>
    <property type="evidence" value="ECO:0007669"/>
    <property type="project" value="UniProtKB-SubCell"/>
</dbReference>
<dbReference type="GO" id="GO:0048476">
    <property type="term" value="C:Holliday junction resolvase complex"/>
    <property type="evidence" value="ECO:0007669"/>
    <property type="project" value="UniProtKB-UniRule"/>
</dbReference>
<dbReference type="GO" id="GO:0008821">
    <property type="term" value="F:crossover junction DNA endonuclease activity"/>
    <property type="evidence" value="ECO:0007669"/>
    <property type="project" value="UniProtKB-UniRule"/>
</dbReference>
<dbReference type="GO" id="GO:0003677">
    <property type="term" value="F:DNA binding"/>
    <property type="evidence" value="ECO:0007669"/>
    <property type="project" value="UniProtKB-KW"/>
</dbReference>
<dbReference type="GO" id="GO:0000287">
    <property type="term" value="F:magnesium ion binding"/>
    <property type="evidence" value="ECO:0007669"/>
    <property type="project" value="UniProtKB-UniRule"/>
</dbReference>
<dbReference type="GO" id="GO:0006310">
    <property type="term" value="P:DNA recombination"/>
    <property type="evidence" value="ECO:0007669"/>
    <property type="project" value="UniProtKB-UniRule"/>
</dbReference>
<dbReference type="GO" id="GO:0006281">
    <property type="term" value="P:DNA repair"/>
    <property type="evidence" value="ECO:0007669"/>
    <property type="project" value="UniProtKB-UniRule"/>
</dbReference>
<dbReference type="CDD" id="cd16962">
    <property type="entry name" value="RuvC"/>
    <property type="match status" value="1"/>
</dbReference>
<dbReference type="FunFam" id="3.30.420.10:FF:000002">
    <property type="entry name" value="Crossover junction endodeoxyribonuclease RuvC"/>
    <property type="match status" value="1"/>
</dbReference>
<dbReference type="Gene3D" id="3.30.420.10">
    <property type="entry name" value="Ribonuclease H-like superfamily/Ribonuclease H"/>
    <property type="match status" value="1"/>
</dbReference>
<dbReference type="HAMAP" id="MF_00034">
    <property type="entry name" value="RuvC"/>
    <property type="match status" value="1"/>
</dbReference>
<dbReference type="InterPro" id="IPR012337">
    <property type="entry name" value="RNaseH-like_sf"/>
</dbReference>
<dbReference type="InterPro" id="IPR036397">
    <property type="entry name" value="RNaseH_sf"/>
</dbReference>
<dbReference type="InterPro" id="IPR002176">
    <property type="entry name" value="X-over_junc_endoDNase_RuvC"/>
</dbReference>
<dbReference type="NCBIfam" id="TIGR00228">
    <property type="entry name" value="ruvC"/>
    <property type="match status" value="1"/>
</dbReference>
<dbReference type="PANTHER" id="PTHR30194">
    <property type="entry name" value="CROSSOVER JUNCTION ENDODEOXYRIBONUCLEASE RUVC"/>
    <property type="match status" value="1"/>
</dbReference>
<dbReference type="PANTHER" id="PTHR30194:SF3">
    <property type="entry name" value="CROSSOVER JUNCTION ENDODEOXYRIBONUCLEASE RUVC"/>
    <property type="match status" value="1"/>
</dbReference>
<dbReference type="Pfam" id="PF02075">
    <property type="entry name" value="RuvC"/>
    <property type="match status" value="1"/>
</dbReference>
<dbReference type="PRINTS" id="PR00696">
    <property type="entry name" value="RSOLVASERUVC"/>
</dbReference>
<dbReference type="SUPFAM" id="SSF53098">
    <property type="entry name" value="Ribonuclease H-like"/>
    <property type="match status" value="1"/>
</dbReference>
<keyword id="KW-0963">Cytoplasm</keyword>
<keyword id="KW-0227">DNA damage</keyword>
<keyword id="KW-0233">DNA recombination</keyword>
<keyword id="KW-0234">DNA repair</keyword>
<keyword id="KW-0238">DNA-binding</keyword>
<keyword id="KW-0255">Endonuclease</keyword>
<keyword id="KW-0378">Hydrolase</keyword>
<keyword id="KW-0460">Magnesium</keyword>
<keyword id="KW-0479">Metal-binding</keyword>
<keyword id="KW-0540">Nuclease</keyword>
<keyword id="KW-1185">Reference proteome</keyword>
<accession>Q2GI72</accession>
<sequence>MKIMGLDPGLNCTGWSILSVSKDIKLIDKGTVVTNSKEDTGQRLRKIHTDVLDILRLYQVDSASMEEIFINKNPKSSISLCYARGILLLTLSTKDIPVFEYSTNYVKKSITGNGHAKKEQVSFMIEKILNVKCSGTYDISDSIAVALCHAYSKKSF</sequence>
<evidence type="ECO:0000255" key="1">
    <source>
        <dbReference type="HAMAP-Rule" id="MF_00034"/>
    </source>
</evidence>
<gene>
    <name evidence="1" type="primary">ruvC</name>
    <name type="ordered locus">ECH_0028</name>
</gene>
<organism>
    <name type="scientific">Ehrlichia chaffeensis (strain ATCC CRL-10679 / Arkansas)</name>
    <dbReference type="NCBI Taxonomy" id="205920"/>
    <lineage>
        <taxon>Bacteria</taxon>
        <taxon>Pseudomonadati</taxon>
        <taxon>Pseudomonadota</taxon>
        <taxon>Alphaproteobacteria</taxon>
        <taxon>Rickettsiales</taxon>
        <taxon>Anaplasmataceae</taxon>
        <taxon>Ehrlichia</taxon>
    </lineage>
</organism>
<protein>
    <recommendedName>
        <fullName evidence="1">Crossover junction endodeoxyribonuclease RuvC</fullName>
        <ecNumber evidence="1">3.1.21.10</ecNumber>
    </recommendedName>
    <alternativeName>
        <fullName evidence="1">Holliday junction nuclease RuvC</fullName>
    </alternativeName>
    <alternativeName>
        <fullName evidence="1">Holliday junction resolvase RuvC</fullName>
    </alternativeName>
</protein>